<accession>Q89753</accession>
<reference key="1">
    <citation type="journal article" date="1995" name="AIDS Res. Hum. Retroviruses">
        <title>Nucleotide sequence of the HIV-2 EHO genome, a divergent HIV-2 isolate.</title>
        <authorList>
            <person name="Galabru J."/>
            <person name="Rey-Cuille M.A."/>
            <person name="Hovanessian A.G."/>
        </authorList>
    </citation>
    <scope>NUCLEOTIDE SEQUENCE [GENOMIC DNA]</scope>
</reference>
<sequence>MEEEKNWIAVPTWRIPCRLERWHSLIKYLKYRTKDLQQVSYVPHHKVGWAWWTCSRVIFPLKEGAHLEVQGYWNLTPERGFLSSYAVRLTWYERSFYTDVTPDVADRLLHGSYFSSFTANEVRRAIRGEKILSHCNYPSAHTGQVPSLQFLALRVVQEGKDGSQGESTTRKQRRRNSRRGIRMARDNIRTSQQSSSQSLAQGTYFPGLAEVLGILA</sequence>
<proteinExistence type="evidence at transcript level"/>
<dbReference type="EMBL" id="U27200">
    <property type="protein sequence ID" value="AAC54468.1"/>
    <property type="molecule type" value="Genomic_DNA"/>
</dbReference>
<dbReference type="SMR" id="Q89753"/>
<dbReference type="Proteomes" id="UP000007423">
    <property type="component" value="Segment"/>
</dbReference>
<dbReference type="GO" id="GO:0030430">
    <property type="term" value="C:host cell cytoplasm"/>
    <property type="evidence" value="ECO:0007669"/>
    <property type="project" value="UniProtKB-SubCell"/>
</dbReference>
<dbReference type="GO" id="GO:0020002">
    <property type="term" value="C:host cell plasma membrane"/>
    <property type="evidence" value="ECO:0007669"/>
    <property type="project" value="UniProtKB-SubCell"/>
</dbReference>
<dbReference type="GO" id="GO:0016020">
    <property type="term" value="C:membrane"/>
    <property type="evidence" value="ECO:0007669"/>
    <property type="project" value="UniProtKB-KW"/>
</dbReference>
<dbReference type="GO" id="GO:0044423">
    <property type="term" value="C:virion component"/>
    <property type="evidence" value="ECO:0007669"/>
    <property type="project" value="UniProtKB-KW"/>
</dbReference>
<dbReference type="GO" id="GO:0019058">
    <property type="term" value="P:viral life cycle"/>
    <property type="evidence" value="ECO:0007669"/>
    <property type="project" value="InterPro"/>
</dbReference>
<dbReference type="InterPro" id="IPR000475">
    <property type="entry name" value="Vif"/>
</dbReference>
<dbReference type="Pfam" id="PF00559">
    <property type="entry name" value="Vif"/>
    <property type="match status" value="1"/>
</dbReference>
<dbReference type="PRINTS" id="PR00349">
    <property type="entry name" value="VIRIONINFFCT"/>
</dbReference>
<gene>
    <name type="primary">vif</name>
</gene>
<organism>
    <name type="scientific">Human immunodeficiency virus type 2 subtype B (isolate EHO)</name>
    <name type="common">HIV-2</name>
    <dbReference type="NCBI Taxonomy" id="388821"/>
    <lineage>
        <taxon>Viruses</taxon>
        <taxon>Riboviria</taxon>
        <taxon>Pararnavirae</taxon>
        <taxon>Artverviricota</taxon>
        <taxon>Revtraviricetes</taxon>
        <taxon>Ortervirales</taxon>
        <taxon>Retroviridae</taxon>
        <taxon>Orthoretrovirinae</taxon>
        <taxon>Lentivirus</taxon>
        <taxon>Human immunodeficiency virus 2</taxon>
    </lineage>
</organism>
<name>VIF_HV2EH</name>
<feature type="chain" id="PRO_0000245154" description="Virion infectivity factor" evidence="1">
    <location>
        <begin position="1"/>
        <end position="216"/>
    </location>
</feature>
<feature type="region of interest" description="Multimerization" evidence="1">
    <location>
        <begin position="154"/>
        <end position="168"/>
    </location>
</feature>
<feature type="region of interest" description="Disordered" evidence="2">
    <location>
        <begin position="159"/>
        <end position="181"/>
    </location>
</feature>
<feature type="short sequence motif" description="HCCH motif" evidence="1">
    <location>
        <begin position="110"/>
        <end position="141"/>
    </location>
</feature>
<feature type="short sequence motif" description="BC-box-like motif" evidence="1">
    <location>
        <begin position="147"/>
        <end position="156"/>
    </location>
</feature>
<feature type="compositionally biased region" description="Basic residues" evidence="2">
    <location>
        <begin position="170"/>
        <end position="181"/>
    </location>
</feature>
<feature type="modified residue" description="Phosphothreonine; by host MAP4K1" evidence="1">
    <location>
        <position position="98"/>
    </location>
</feature>
<feature type="modified residue" description="Phosphoserine; by host" evidence="1">
    <location>
        <position position="147"/>
    </location>
</feature>
<protein>
    <recommendedName>
        <fullName>Virion infectivity factor</fullName>
        <shortName>Vif</shortName>
    </recommendedName>
    <alternativeName>
        <fullName>Q protein</fullName>
    </alternativeName>
    <alternativeName>
        <fullName>SOR protein</fullName>
    </alternativeName>
</protein>
<keyword id="KW-0014">AIDS</keyword>
<keyword id="KW-1032">Host cell membrane</keyword>
<keyword id="KW-1035">Host cytoplasm</keyword>
<keyword id="KW-1043">Host membrane</keyword>
<keyword id="KW-0945">Host-virus interaction</keyword>
<keyword id="KW-0472">Membrane</keyword>
<keyword id="KW-0597">Phosphoprotein</keyword>
<keyword id="KW-0832">Ubl conjugation</keyword>
<keyword id="KW-0833">Ubl conjugation pathway</keyword>
<keyword id="KW-0946">Virion</keyword>
<evidence type="ECO:0000250" key="1"/>
<evidence type="ECO:0000256" key="2">
    <source>
        <dbReference type="SAM" id="MobiDB-lite"/>
    </source>
</evidence>
<evidence type="ECO:0000305" key="3"/>
<organismHost>
    <name type="scientific">Homo sapiens</name>
    <name type="common">Human</name>
    <dbReference type="NCBI Taxonomy" id="9606"/>
</organismHost>
<comment type="function">
    <text evidence="1">Counteracts the innate antiviral activity of APOBEC3G. Forms a complex with host APOBEC3G thus preventing the entry of this lethally hypermutating enzyme into progeny virions. Functions as an adapter molecule, recruiting APOBEC3G to the ubiquitin-proteasome machinery. Targets APOBEC3G for degradation through the assembly with elongin BC complex, CUL5 and RBX1. Binds viral RNA and affects the stability of viral nucleoprotein core. May play a role in viral morphology (By similarity).</text>
</comment>
<comment type="subunit">
    <text evidence="1">Homomultimer; in vitro and presumably in vivo. Interacts with viral Pr55Gag precursor and human APOBEC3G. The interaction between Vif and APOBEC3G is species-specific, which may play a role in restricting the replication of HIV to humans. Forms an E3 ligase complex by interacting with human CUL5 and elongin BC complex (ELOB and ELOC) (By similarity).</text>
</comment>
<comment type="subcellular location">
    <subcellularLocation>
        <location evidence="1">Host cytoplasm</location>
    </subcellularLocation>
    <subcellularLocation>
        <location evidence="1">Host cell membrane</location>
        <topology evidence="1">Peripheral membrane protein</topology>
        <orientation evidence="1">Cytoplasmic side</orientation>
    </subcellularLocation>
    <subcellularLocation>
        <location evidence="1">Virion</location>
    </subcellularLocation>
    <text evidence="1">In the cytoplasm, seems to colocalize with intermediate filament vimentin. A fraction is associated with the cytoplasmic side of cellular membranes, presumably via the interaction with Pr55Gag precursor (By similarity).</text>
</comment>
<comment type="induction">
    <text>Expressed late during infection in a Rev-dependent manner.</text>
</comment>
<comment type="domain">
    <text evidence="1">The BC-like-box motif mediates the interaction with elongin BC complex.</text>
</comment>
<comment type="PTM">
    <text evidence="1">Highly phosphorylated on serine and threonine residues.</text>
</comment>
<comment type="PTM">
    <text evidence="1">Polyubiquitinated and degraded by the proteasome in the presence of APOBEC3G.</text>
</comment>
<comment type="miscellaneous">
    <text>Required for replication in 'nonpermissive' cells, including primary T-cells, macrophages and certain T-cell lines, but is dispensable for replication in 'permissive' cell lines, such as 293T cells. In nonpermissive cells, Vif-defective viruses can produce virions, but they fail to complete reverse transcription and cannot successfully infect new cells.</text>
</comment>
<comment type="miscellaneous">
    <text>Vif-defective viruses show catastrophic failure in reverse transcription due to APOBEC-induced mutations that initiate a DNA base repair pathway and compromise the structural integrity of the ssDNA. In the absence of Vif, the virion is morphologically abnormal.</text>
</comment>
<comment type="similarity">
    <text evidence="3">Belongs to the primate lentivirus group Vif protein family.</text>
</comment>